<gene>
    <name type="primary">rpl2</name>
</gene>
<dbReference type="EMBL" id="AP009339">
    <property type="protein sequence ID" value="BAF64989.1"/>
    <property type="molecule type" value="Genomic_DNA"/>
</dbReference>
<dbReference type="RefSeq" id="YP_001312248.1">
    <property type="nucleotide sequence ID" value="NC_009618.1"/>
</dbReference>
<dbReference type="SMR" id="A6H5M3"/>
<dbReference type="GeneID" id="5309499"/>
<dbReference type="GO" id="GO:0009507">
    <property type="term" value="C:chloroplast"/>
    <property type="evidence" value="ECO:0007669"/>
    <property type="project" value="UniProtKB-SubCell"/>
</dbReference>
<dbReference type="GO" id="GO:0005762">
    <property type="term" value="C:mitochondrial large ribosomal subunit"/>
    <property type="evidence" value="ECO:0007669"/>
    <property type="project" value="TreeGrafter"/>
</dbReference>
<dbReference type="GO" id="GO:0019843">
    <property type="term" value="F:rRNA binding"/>
    <property type="evidence" value="ECO:0007669"/>
    <property type="project" value="UniProtKB-UniRule"/>
</dbReference>
<dbReference type="GO" id="GO:0003735">
    <property type="term" value="F:structural constituent of ribosome"/>
    <property type="evidence" value="ECO:0007669"/>
    <property type="project" value="InterPro"/>
</dbReference>
<dbReference type="GO" id="GO:0016740">
    <property type="term" value="F:transferase activity"/>
    <property type="evidence" value="ECO:0007669"/>
    <property type="project" value="InterPro"/>
</dbReference>
<dbReference type="GO" id="GO:0032543">
    <property type="term" value="P:mitochondrial translation"/>
    <property type="evidence" value="ECO:0007669"/>
    <property type="project" value="TreeGrafter"/>
</dbReference>
<dbReference type="FunFam" id="4.10.950.10:FF:000001">
    <property type="entry name" value="50S ribosomal protein L2"/>
    <property type="match status" value="1"/>
</dbReference>
<dbReference type="FunFam" id="2.30.30.30:FF:000008">
    <property type="entry name" value="50S ribosomal protein L2, chloroplastic"/>
    <property type="match status" value="1"/>
</dbReference>
<dbReference type="FunFam" id="2.40.50.140:FF:000029">
    <property type="entry name" value="50S ribosomal protein L2, chloroplastic"/>
    <property type="match status" value="1"/>
</dbReference>
<dbReference type="Gene3D" id="2.30.30.30">
    <property type="match status" value="1"/>
</dbReference>
<dbReference type="Gene3D" id="2.40.50.140">
    <property type="entry name" value="Nucleic acid-binding proteins"/>
    <property type="match status" value="1"/>
</dbReference>
<dbReference type="Gene3D" id="4.10.950.10">
    <property type="entry name" value="Ribosomal protein L2, domain 3"/>
    <property type="match status" value="1"/>
</dbReference>
<dbReference type="HAMAP" id="MF_01320_B">
    <property type="entry name" value="Ribosomal_uL2_B"/>
    <property type="match status" value="1"/>
</dbReference>
<dbReference type="InterPro" id="IPR012340">
    <property type="entry name" value="NA-bd_OB-fold"/>
</dbReference>
<dbReference type="InterPro" id="IPR014722">
    <property type="entry name" value="Rib_uL2_dom2"/>
</dbReference>
<dbReference type="InterPro" id="IPR002171">
    <property type="entry name" value="Ribosomal_uL2"/>
</dbReference>
<dbReference type="InterPro" id="IPR005880">
    <property type="entry name" value="Ribosomal_uL2_bac/org-type"/>
</dbReference>
<dbReference type="InterPro" id="IPR022669">
    <property type="entry name" value="Ribosomal_uL2_C"/>
</dbReference>
<dbReference type="InterPro" id="IPR022671">
    <property type="entry name" value="Ribosomal_uL2_CS"/>
</dbReference>
<dbReference type="InterPro" id="IPR014726">
    <property type="entry name" value="Ribosomal_uL2_dom3"/>
</dbReference>
<dbReference type="InterPro" id="IPR022666">
    <property type="entry name" value="Ribosomal_uL2_RNA-bd_dom"/>
</dbReference>
<dbReference type="InterPro" id="IPR008991">
    <property type="entry name" value="Translation_prot_SH3-like_sf"/>
</dbReference>
<dbReference type="NCBIfam" id="TIGR01171">
    <property type="entry name" value="rplB_bact"/>
    <property type="match status" value="1"/>
</dbReference>
<dbReference type="PANTHER" id="PTHR13691:SF5">
    <property type="entry name" value="LARGE RIBOSOMAL SUBUNIT PROTEIN UL2M"/>
    <property type="match status" value="1"/>
</dbReference>
<dbReference type="PANTHER" id="PTHR13691">
    <property type="entry name" value="RIBOSOMAL PROTEIN L2"/>
    <property type="match status" value="1"/>
</dbReference>
<dbReference type="Pfam" id="PF00181">
    <property type="entry name" value="Ribosomal_L2"/>
    <property type="match status" value="1"/>
</dbReference>
<dbReference type="Pfam" id="PF03947">
    <property type="entry name" value="Ribosomal_L2_C"/>
    <property type="match status" value="1"/>
</dbReference>
<dbReference type="PIRSF" id="PIRSF002158">
    <property type="entry name" value="Ribosomal_L2"/>
    <property type="match status" value="1"/>
</dbReference>
<dbReference type="SMART" id="SM01383">
    <property type="entry name" value="Ribosomal_L2"/>
    <property type="match status" value="1"/>
</dbReference>
<dbReference type="SMART" id="SM01382">
    <property type="entry name" value="Ribosomal_L2_C"/>
    <property type="match status" value="1"/>
</dbReference>
<dbReference type="SUPFAM" id="SSF50249">
    <property type="entry name" value="Nucleic acid-binding proteins"/>
    <property type="match status" value="1"/>
</dbReference>
<dbReference type="SUPFAM" id="SSF50104">
    <property type="entry name" value="Translation proteins SH3-like domain"/>
    <property type="match status" value="1"/>
</dbReference>
<dbReference type="PROSITE" id="PS00467">
    <property type="entry name" value="RIBOSOMAL_L2"/>
    <property type="match status" value="1"/>
</dbReference>
<comment type="subunit">
    <text evidence="1">Part of the 50S ribosomal subunit.</text>
</comment>
<comment type="subcellular location">
    <subcellularLocation>
        <location>Plastid</location>
        <location>Chloroplast</location>
    </subcellularLocation>
</comment>
<comment type="similarity">
    <text evidence="4">Belongs to the universal ribosomal protein uL2 family.</text>
</comment>
<name>RK2_CYCTA</name>
<geneLocation type="chloroplast"/>
<proteinExistence type="inferred from homology"/>
<reference key="1">
    <citation type="journal article" date="2007" name="Mol. Biol. Evol.">
        <title>Chloroplast genome (cpDNA) of Cycas taitungensis and 56 cp protein-coding genes of Gnetum parvifolium: insights into cpDNA evolution and phylogeny of extant seed plants.</title>
        <authorList>
            <person name="Wu C.-S."/>
            <person name="Wang Y.-N."/>
            <person name="Liu S.-M."/>
            <person name="Chaw S.-M."/>
        </authorList>
    </citation>
    <scope>NUCLEOTIDE SEQUENCE [LARGE SCALE GENOMIC DNA]</scope>
</reference>
<accession>A6H5M3</accession>
<sequence>MAIRSYRTYTPSTRNRPISSYDGRVRSNPQKKLTSGQHRCGKGRNSRGIITARHRGGGHKRLYRQIDFQRNEKYIFGEIVTIEYDPNRSAYICLVHYGDGEKKYILHPRGVIIGDTITSGPRAPISIGNALPLTDVPLGTAIHSIEITLGKGGQLARAAGAVAELIAKEGRSTTLRLPSGEIRLISENCSATIGQVGNVNANNGTLGKAGSKRWLGKRPRVRGVVMNPVDHPHGGGEGRTPIGRKKPVTPWGYAALGRKSRKNNKYSDASILRRRK</sequence>
<feature type="chain" id="PRO_0000310074" description="Large ribosomal subunit protein uL2c">
    <location>
        <begin position="1"/>
        <end position="276"/>
    </location>
</feature>
<feature type="region of interest" description="Disordered" evidence="3">
    <location>
        <begin position="1"/>
        <end position="51"/>
    </location>
</feature>
<feature type="region of interest" description="Disordered" evidence="3">
    <location>
        <begin position="224"/>
        <end position="276"/>
    </location>
</feature>
<feature type="compositionally biased region" description="Polar residues" evidence="3">
    <location>
        <begin position="7"/>
        <end position="18"/>
    </location>
</feature>
<feature type="compositionally biased region" description="Polar residues" evidence="3">
    <location>
        <begin position="27"/>
        <end position="37"/>
    </location>
</feature>
<keyword id="KW-0150">Chloroplast</keyword>
<keyword id="KW-0934">Plastid</keyword>
<keyword id="KW-0687">Ribonucleoprotein</keyword>
<keyword id="KW-0689">Ribosomal protein</keyword>
<evidence type="ECO:0000250" key="1"/>
<evidence type="ECO:0000255" key="2">
    <source>
        <dbReference type="HAMAP-Rule" id="MF_01320"/>
    </source>
</evidence>
<evidence type="ECO:0000256" key="3">
    <source>
        <dbReference type="SAM" id="MobiDB-lite"/>
    </source>
</evidence>
<evidence type="ECO:0000305" key="4"/>
<organism>
    <name type="scientific">Cycas taitungensis</name>
    <name type="common">Prince sago</name>
    <name type="synonym">Cycas taiwaniana</name>
    <dbReference type="NCBI Taxonomy" id="54799"/>
    <lineage>
        <taxon>Eukaryota</taxon>
        <taxon>Viridiplantae</taxon>
        <taxon>Streptophyta</taxon>
        <taxon>Embryophyta</taxon>
        <taxon>Tracheophyta</taxon>
        <taxon>Spermatophyta</taxon>
        <taxon>Cycadidae</taxon>
        <taxon>Cycadales</taxon>
        <taxon>Cycadaceae</taxon>
        <taxon>Cycas</taxon>
    </lineage>
</organism>
<protein>
    <recommendedName>
        <fullName evidence="2">Large ribosomal subunit protein uL2c</fullName>
    </recommendedName>
    <alternativeName>
        <fullName evidence="4">50S ribosomal protein L2, chloroplastic</fullName>
    </alternativeName>
</protein>